<name>MATK_STYJP</name>
<evidence type="ECO:0000255" key="1">
    <source>
        <dbReference type="HAMAP-Rule" id="MF_01390"/>
    </source>
</evidence>
<geneLocation type="chloroplast"/>
<reference key="1">
    <citation type="journal article" date="2004" name="Am. J. Bot.">
        <title>A phylogeny of legumes (Leguminosae) based on analysis of the plastid matK gene resolves many well-supported subclades within the family.</title>
        <authorList>
            <person name="Wojciechowski M.F."/>
            <person name="Lavin M."/>
            <person name="Sanderson M.J."/>
        </authorList>
        <dbReference type="AGRICOLA" id="IND43661289"/>
    </citation>
    <scope>NUCLEOTIDE SEQUENCE [GENOMIC DNA]</scope>
</reference>
<proteinExistence type="inferred from homology"/>
<organism>
    <name type="scientific">Styphnolobium japonicum</name>
    <name type="common">Japanese pagoda tree</name>
    <name type="synonym">Sophora japonica</name>
    <dbReference type="NCBI Taxonomy" id="3897"/>
    <lineage>
        <taxon>Eukaryota</taxon>
        <taxon>Viridiplantae</taxon>
        <taxon>Streptophyta</taxon>
        <taxon>Embryophyta</taxon>
        <taxon>Tracheophyta</taxon>
        <taxon>Spermatophyta</taxon>
        <taxon>Magnoliopsida</taxon>
        <taxon>eudicotyledons</taxon>
        <taxon>Gunneridae</taxon>
        <taxon>Pentapetalae</taxon>
        <taxon>rosids</taxon>
        <taxon>fabids</taxon>
        <taxon>Fabales</taxon>
        <taxon>Fabaceae</taxon>
        <taxon>Papilionoideae</taxon>
        <taxon>Cladrastis clade</taxon>
        <taxon>Styphnolobium</taxon>
    </lineage>
</organism>
<sequence length="506" mass="60600">MEEYQVYLELDRSRQQDFLYPLIFREYIYGLAYGHDLNRSILVENVGYDNKSSLLIVKRLITRMYQQNHLIISANDSNKNPFWGYNKNLYSQIISEGFAVVVEIPFSLQLSSSLEEAEIVKSYKNLRSIHSIFPFFEDQFTYLNYVSDVRIPYPIHLEILVQTLRYWVKDAPFFHLLRLFIYEYCNWNSLITPKKYISTFSKRNTRFFLFLYNFYVCEYESILLFLRNKSAHLRLTSFSVLFERIYFYAKIEHLVEVFAKDFSSTLSFFKDPFIHYVRYQGKSILASKNAPLLMNKWKYYLIHLWQYHFYVWSQPGTIHINQLSEHSFHFLGYFSNVRINLSAVRSQMLENSFIIEIGMKKLDTIVPIIPLIRSLAKAKFCNVLGHPISKPVWAYSSDFYIIDRFLRICRNLSHYYNGSSKKKSLYQIKYILRLSCIKTLARKHKSTVRAFLKRLGSEEFLEEFFTEEEEILSLIFPRASSTLQRLYRGRIWYLDIIFINDLVNHE</sequence>
<keyword id="KW-0150">Chloroplast</keyword>
<keyword id="KW-0507">mRNA processing</keyword>
<keyword id="KW-0934">Plastid</keyword>
<keyword id="KW-0694">RNA-binding</keyword>
<keyword id="KW-0819">tRNA processing</keyword>
<feature type="chain" id="PRO_0000143713" description="Maturase K">
    <location>
        <begin position="1"/>
        <end position="506"/>
    </location>
</feature>
<accession>Q5YJU0</accession>
<protein>
    <recommendedName>
        <fullName evidence="1">Maturase K</fullName>
    </recommendedName>
    <alternativeName>
        <fullName evidence="1">Intron maturase</fullName>
    </alternativeName>
</protein>
<comment type="function">
    <text evidence="1">Usually encoded in the trnK tRNA gene intron. Probably assists in splicing its own and other chloroplast group II introns.</text>
</comment>
<comment type="subcellular location">
    <subcellularLocation>
        <location>Plastid</location>
        <location>Chloroplast</location>
    </subcellularLocation>
</comment>
<comment type="similarity">
    <text evidence="1">Belongs to the intron maturase 2 family. MatK subfamily.</text>
</comment>
<gene>
    <name evidence="1" type="primary">matK</name>
</gene>
<dbReference type="EMBL" id="AY386962">
    <property type="protein sequence ID" value="AAQ92040.1"/>
    <property type="molecule type" value="Genomic_DNA"/>
</dbReference>
<dbReference type="RefSeq" id="YP_009755927.1">
    <property type="nucleotide sequence ID" value="NC_047059.1"/>
</dbReference>
<dbReference type="GeneID" id="54371845"/>
<dbReference type="GO" id="GO:0009507">
    <property type="term" value="C:chloroplast"/>
    <property type="evidence" value="ECO:0007669"/>
    <property type="project" value="UniProtKB-SubCell"/>
</dbReference>
<dbReference type="GO" id="GO:0003723">
    <property type="term" value="F:RNA binding"/>
    <property type="evidence" value="ECO:0007669"/>
    <property type="project" value="UniProtKB-KW"/>
</dbReference>
<dbReference type="GO" id="GO:0006397">
    <property type="term" value="P:mRNA processing"/>
    <property type="evidence" value="ECO:0007669"/>
    <property type="project" value="UniProtKB-KW"/>
</dbReference>
<dbReference type="GO" id="GO:0008380">
    <property type="term" value="P:RNA splicing"/>
    <property type="evidence" value="ECO:0007669"/>
    <property type="project" value="UniProtKB-UniRule"/>
</dbReference>
<dbReference type="GO" id="GO:0008033">
    <property type="term" value="P:tRNA processing"/>
    <property type="evidence" value="ECO:0007669"/>
    <property type="project" value="UniProtKB-KW"/>
</dbReference>
<dbReference type="HAMAP" id="MF_01390">
    <property type="entry name" value="MatK"/>
    <property type="match status" value="1"/>
</dbReference>
<dbReference type="InterPro" id="IPR024937">
    <property type="entry name" value="Domain_X"/>
</dbReference>
<dbReference type="InterPro" id="IPR002866">
    <property type="entry name" value="Maturase_MatK"/>
</dbReference>
<dbReference type="InterPro" id="IPR024942">
    <property type="entry name" value="Maturase_MatK_N"/>
</dbReference>
<dbReference type="PANTHER" id="PTHR34811">
    <property type="entry name" value="MATURASE K"/>
    <property type="match status" value="1"/>
</dbReference>
<dbReference type="PANTHER" id="PTHR34811:SF1">
    <property type="entry name" value="MATURASE K"/>
    <property type="match status" value="1"/>
</dbReference>
<dbReference type="Pfam" id="PF01348">
    <property type="entry name" value="Intron_maturas2"/>
    <property type="match status" value="1"/>
</dbReference>
<dbReference type="Pfam" id="PF01824">
    <property type="entry name" value="MatK_N"/>
    <property type="match status" value="1"/>
</dbReference>